<feature type="chain" id="PRO_0000282301" description="Conserved virulence factor B">
    <location>
        <begin position="1"/>
        <end position="299"/>
    </location>
</feature>
<protein>
    <recommendedName>
        <fullName>Conserved virulence factor B</fullName>
    </recommendedName>
</protein>
<comment type="similarity">
    <text evidence="1">Belongs to the CvfB family.</text>
</comment>
<proteinExistence type="inferred from homology"/>
<reference key="1">
    <citation type="journal article" date="2005" name="Proc. Natl. Acad. Sci. U.S.A.">
        <title>Whole genome sequence of Staphylococcus saprophyticus reveals the pathogenesis of uncomplicated urinary tract infection.</title>
        <authorList>
            <person name="Kuroda M."/>
            <person name="Yamashita A."/>
            <person name="Hirakawa H."/>
            <person name="Kumano M."/>
            <person name="Morikawa K."/>
            <person name="Higashide M."/>
            <person name="Maruyama A."/>
            <person name="Inose Y."/>
            <person name="Matoba K."/>
            <person name="Toh H."/>
            <person name="Kuhara S."/>
            <person name="Hattori M."/>
            <person name="Ohta T."/>
        </authorList>
    </citation>
    <scope>NUCLEOTIDE SEQUENCE [LARGE SCALE GENOMIC DNA]</scope>
    <source>
        <strain>ATCC 15305 / DSM 20229 / NCIMB 8711 / NCTC 7292 / S-41</strain>
    </source>
</reference>
<sequence>MAQDEKDIVGSIEFLEVVGLEGSTYKLKGPNGEEVKLNQSEINDEDELQIGEEYSFFVYPNRSGALFATQNMPDITTNKYDFVKVLKTDRDGAHVDVGLPREVLIPWEDLPKVKDVWPVQGDELFVTLRIDRDNNMFARLATETIVEQMYTPVFDDEKQNQVIEARPYRLLRIGSFLLSKYGYKIFVHETERKEEPRLGENVSVRIIGHNEKGELNGSFLPLAHERLDDDGQHIFDLLVEYDGELPFSDKSSPEAIKEIFNMSKGSFKRAIGHLYKNKIITIESGKIALTQKGWGRIEK</sequence>
<organism>
    <name type="scientific">Staphylococcus saprophyticus subsp. saprophyticus (strain ATCC 15305 / DSM 20229 / NCIMB 8711 / NCTC 7292 / S-41)</name>
    <dbReference type="NCBI Taxonomy" id="342451"/>
    <lineage>
        <taxon>Bacteria</taxon>
        <taxon>Bacillati</taxon>
        <taxon>Bacillota</taxon>
        <taxon>Bacilli</taxon>
        <taxon>Bacillales</taxon>
        <taxon>Staphylococcaceae</taxon>
        <taxon>Staphylococcus</taxon>
    </lineage>
</organism>
<evidence type="ECO:0000305" key="1"/>
<accession>Q49XJ2</accession>
<dbReference type="EMBL" id="AP008934">
    <property type="protein sequence ID" value="BAE18505.1"/>
    <property type="molecule type" value="Genomic_DNA"/>
</dbReference>
<dbReference type="RefSeq" id="WP_011303138.1">
    <property type="nucleotide sequence ID" value="NC_007350.1"/>
</dbReference>
<dbReference type="SMR" id="Q49XJ2"/>
<dbReference type="GeneID" id="3616698"/>
<dbReference type="KEGG" id="ssp:SSP1360"/>
<dbReference type="PATRIC" id="fig|342451.11.peg.1364"/>
<dbReference type="eggNOG" id="COG2996">
    <property type="taxonomic scope" value="Bacteria"/>
</dbReference>
<dbReference type="HOGENOM" id="CLU_064885_0_0_9"/>
<dbReference type="OrthoDB" id="9801597at2"/>
<dbReference type="Proteomes" id="UP000006371">
    <property type="component" value="Chromosome"/>
</dbReference>
<dbReference type="Gene3D" id="2.40.50.140">
    <property type="entry name" value="Nucleic acid-binding proteins"/>
    <property type="match status" value="2"/>
</dbReference>
<dbReference type="Gene3D" id="1.10.10.10">
    <property type="entry name" value="Winged helix-like DNA-binding domain superfamily/Winged helix DNA-binding domain"/>
    <property type="match status" value="1"/>
</dbReference>
<dbReference type="InterPro" id="IPR014464">
    <property type="entry name" value="CvfB_fam"/>
</dbReference>
<dbReference type="InterPro" id="IPR048588">
    <property type="entry name" value="CvfB_S1_2nd"/>
</dbReference>
<dbReference type="InterPro" id="IPR048587">
    <property type="entry name" value="CvfB_S1_3rd"/>
</dbReference>
<dbReference type="InterPro" id="IPR039566">
    <property type="entry name" value="CvfB_S1_st"/>
</dbReference>
<dbReference type="InterPro" id="IPR040764">
    <property type="entry name" value="CvfB_WH"/>
</dbReference>
<dbReference type="InterPro" id="IPR012340">
    <property type="entry name" value="NA-bd_OB-fold"/>
</dbReference>
<dbReference type="InterPro" id="IPR036388">
    <property type="entry name" value="WH-like_DNA-bd_sf"/>
</dbReference>
<dbReference type="PANTHER" id="PTHR37296">
    <property type="entry name" value="CONSERVED VIRULENCE FACTOR B"/>
    <property type="match status" value="1"/>
</dbReference>
<dbReference type="PANTHER" id="PTHR37296:SF1">
    <property type="entry name" value="CONSERVED VIRULENCE FACTOR B"/>
    <property type="match status" value="1"/>
</dbReference>
<dbReference type="Pfam" id="PF21191">
    <property type="entry name" value="CvfB_1st"/>
    <property type="match status" value="1"/>
</dbReference>
<dbReference type="Pfam" id="PF21543">
    <property type="entry name" value="CvfB_2nd"/>
    <property type="match status" value="1"/>
</dbReference>
<dbReference type="Pfam" id="PF17783">
    <property type="entry name" value="CvfB_WH"/>
    <property type="match status" value="1"/>
</dbReference>
<dbReference type="Pfam" id="PF13509">
    <property type="entry name" value="S1_2"/>
    <property type="match status" value="1"/>
</dbReference>
<dbReference type="PIRSF" id="PIRSF012524">
    <property type="entry name" value="YitL_S1"/>
    <property type="match status" value="1"/>
</dbReference>
<gene>
    <name type="primary">cvfB</name>
    <name type="ordered locus">SSP1360</name>
</gene>
<name>CVFB_STAS1</name>
<keyword id="KW-1185">Reference proteome</keyword>